<proteinExistence type="inferred from homology"/>
<feature type="chain" id="PRO_1000024249" description="Dihydroorotate dehydrogenase (quinone)">
    <location>
        <begin position="1"/>
        <end position="336"/>
    </location>
</feature>
<feature type="active site" description="Nucleophile" evidence="1">
    <location>
        <position position="175"/>
    </location>
</feature>
<feature type="binding site" evidence="1">
    <location>
        <begin position="62"/>
        <end position="66"/>
    </location>
    <ligand>
        <name>FMN</name>
        <dbReference type="ChEBI" id="CHEBI:58210"/>
    </ligand>
</feature>
<feature type="binding site" evidence="1">
    <location>
        <position position="66"/>
    </location>
    <ligand>
        <name>substrate</name>
    </ligand>
</feature>
<feature type="binding site" evidence="1">
    <location>
        <position position="86"/>
    </location>
    <ligand>
        <name>FMN</name>
        <dbReference type="ChEBI" id="CHEBI:58210"/>
    </ligand>
</feature>
<feature type="binding site" evidence="1">
    <location>
        <begin position="111"/>
        <end position="115"/>
    </location>
    <ligand>
        <name>substrate</name>
    </ligand>
</feature>
<feature type="binding site" evidence="1">
    <location>
        <position position="139"/>
    </location>
    <ligand>
        <name>FMN</name>
        <dbReference type="ChEBI" id="CHEBI:58210"/>
    </ligand>
</feature>
<feature type="binding site" evidence="1">
    <location>
        <position position="172"/>
    </location>
    <ligand>
        <name>FMN</name>
        <dbReference type="ChEBI" id="CHEBI:58210"/>
    </ligand>
</feature>
<feature type="binding site" evidence="1">
    <location>
        <position position="172"/>
    </location>
    <ligand>
        <name>substrate</name>
    </ligand>
</feature>
<feature type="binding site" evidence="1">
    <location>
        <position position="177"/>
    </location>
    <ligand>
        <name>substrate</name>
    </ligand>
</feature>
<feature type="binding site" evidence="1">
    <location>
        <position position="217"/>
    </location>
    <ligand>
        <name>FMN</name>
        <dbReference type="ChEBI" id="CHEBI:58210"/>
    </ligand>
</feature>
<feature type="binding site" evidence="1">
    <location>
        <position position="245"/>
    </location>
    <ligand>
        <name>FMN</name>
        <dbReference type="ChEBI" id="CHEBI:58210"/>
    </ligand>
</feature>
<feature type="binding site" evidence="1">
    <location>
        <begin position="246"/>
        <end position="247"/>
    </location>
    <ligand>
        <name>substrate</name>
    </ligand>
</feature>
<feature type="binding site" evidence="1">
    <location>
        <position position="268"/>
    </location>
    <ligand>
        <name>FMN</name>
        <dbReference type="ChEBI" id="CHEBI:58210"/>
    </ligand>
</feature>
<feature type="binding site" evidence="1">
    <location>
        <position position="297"/>
    </location>
    <ligand>
        <name>FMN</name>
        <dbReference type="ChEBI" id="CHEBI:58210"/>
    </ligand>
</feature>
<feature type="binding site" evidence="1">
    <location>
        <begin position="318"/>
        <end position="319"/>
    </location>
    <ligand>
        <name>FMN</name>
        <dbReference type="ChEBI" id="CHEBI:58210"/>
    </ligand>
</feature>
<name>PYRD_YERPN</name>
<sequence>MYYPLVRKALFQLDPERAHELTFRQLKRVSGTPLEFLVRQSVPTKPVSCMGLSFKNPVGLAAGLDKDGECIDALGAMGFGFIEVGTVTPRPQVGNDKPRLFRIVEAEGLINRMGFNNHGVDNLIENVKKSHFGGILGINIGKNKDTPVEQGKEDYLICMDKIYPYAGYIAINISSPNTPGLRSLQYGEALDDLLAAIKDKQTELHQRHHKYVPVAVKIAPDLTEEELIQIADSLVRHNIDGVIATNTTLDRSLIQGLNYCEQAGGLSGRPLQLRSTEVIHRLSQELKGRLPIIGVGGIDSVTAAREKMAAGASLIQIYSGFIFRGPGLIKNIVTHI</sequence>
<protein>
    <recommendedName>
        <fullName evidence="1">Dihydroorotate dehydrogenase (quinone)</fullName>
        <ecNumber evidence="1">1.3.5.2</ecNumber>
    </recommendedName>
    <alternativeName>
        <fullName evidence="1">DHOdehase</fullName>
        <shortName evidence="1">DHOD</shortName>
        <shortName evidence="1">DHODase</shortName>
    </alternativeName>
    <alternativeName>
        <fullName evidence="1">Dihydroorotate oxidase</fullName>
    </alternativeName>
</protein>
<evidence type="ECO:0000255" key="1">
    <source>
        <dbReference type="HAMAP-Rule" id="MF_00225"/>
    </source>
</evidence>
<organism>
    <name type="scientific">Yersinia pestis bv. Antiqua (strain Nepal516)</name>
    <dbReference type="NCBI Taxonomy" id="377628"/>
    <lineage>
        <taxon>Bacteria</taxon>
        <taxon>Pseudomonadati</taxon>
        <taxon>Pseudomonadota</taxon>
        <taxon>Gammaproteobacteria</taxon>
        <taxon>Enterobacterales</taxon>
        <taxon>Yersiniaceae</taxon>
        <taxon>Yersinia</taxon>
    </lineage>
</organism>
<comment type="function">
    <text evidence="1">Catalyzes the conversion of dihydroorotate to orotate with quinone as electron acceptor.</text>
</comment>
<comment type="catalytic activity">
    <reaction evidence="1">
        <text>(S)-dihydroorotate + a quinone = orotate + a quinol</text>
        <dbReference type="Rhea" id="RHEA:30187"/>
        <dbReference type="ChEBI" id="CHEBI:24646"/>
        <dbReference type="ChEBI" id="CHEBI:30839"/>
        <dbReference type="ChEBI" id="CHEBI:30864"/>
        <dbReference type="ChEBI" id="CHEBI:132124"/>
        <dbReference type="EC" id="1.3.5.2"/>
    </reaction>
</comment>
<comment type="cofactor">
    <cofactor evidence="1">
        <name>FMN</name>
        <dbReference type="ChEBI" id="CHEBI:58210"/>
    </cofactor>
    <text evidence="1">Binds 1 FMN per subunit.</text>
</comment>
<comment type="pathway">
    <text evidence="1">Pyrimidine metabolism; UMP biosynthesis via de novo pathway; orotate from (S)-dihydroorotate (quinone route): step 1/1.</text>
</comment>
<comment type="subunit">
    <text evidence="1">Monomer.</text>
</comment>
<comment type="subcellular location">
    <subcellularLocation>
        <location evidence="1">Cell membrane</location>
        <topology evidence="1">Peripheral membrane protein</topology>
    </subcellularLocation>
</comment>
<comment type="similarity">
    <text evidence="1">Belongs to the dihydroorotate dehydrogenase family. Type 2 subfamily.</text>
</comment>
<keyword id="KW-1003">Cell membrane</keyword>
<keyword id="KW-0285">Flavoprotein</keyword>
<keyword id="KW-0288">FMN</keyword>
<keyword id="KW-0472">Membrane</keyword>
<keyword id="KW-0560">Oxidoreductase</keyword>
<keyword id="KW-0665">Pyrimidine biosynthesis</keyword>
<gene>
    <name evidence="1" type="primary">pyrD</name>
    <name type="ordered locus">YPN_2562</name>
    <name type="ORF">YP516_2880</name>
</gene>
<dbReference type="EC" id="1.3.5.2" evidence="1"/>
<dbReference type="EMBL" id="CP000305">
    <property type="protein sequence ID" value="ABG18890.1"/>
    <property type="molecule type" value="Genomic_DNA"/>
</dbReference>
<dbReference type="EMBL" id="ACNQ01000017">
    <property type="protein sequence ID" value="EEO74996.1"/>
    <property type="molecule type" value="Genomic_DNA"/>
</dbReference>
<dbReference type="RefSeq" id="WP_002211296.1">
    <property type="nucleotide sequence ID" value="NZ_ACNQ01000017.1"/>
</dbReference>
<dbReference type="SMR" id="Q1CGJ0"/>
<dbReference type="GeneID" id="57977211"/>
<dbReference type="KEGG" id="ypn:YPN_2562"/>
<dbReference type="HOGENOM" id="CLU_013640_2_0_6"/>
<dbReference type="UniPathway" id="UPA00070">
    <property type="reaction ID" value="UER00946"/>
</dbReference>
<dbReference type="Proteomes" id="UP000008936">
    <property type="component" value="Chromosome"/>
</dbReference>
<dbReference type="GO" id="GO:0005737">
    <property type="term" value="C:cytoplasm"/>
    <property type="evidence" value="ECO:0007669"/>
    <property type="project" value="InterPro"/>
</dbReference>
<dbReference type="GO" id="GO:0005886">
    <property type="term" value="C:plasma membrane"/>
    <property type="evidence" value="ECO:0007669"/>
    <property type="project" value="UniProtKB-SubCell"/>
</dbReference>
<dbReference type="GO" id="GO:0106430">
    <property type="term" value="F:dihydroorotate dehydrogenase (quinone) activity"/>
    <property type="evidence" value="ECO:0007669"/>
    <property type="project" value="UniProtKB-EC"/>
</dbReference>
<dbReference type="GO" id="GO:0006207">
    <property type="term" value="P:'de novo' pyrimidine nucleobase biosynthetic process"/>
    <property type="evidence" value="ECO:0007669"/>
    <property type="project" value="InterPro"/>
</dbReference>
<dbReference type="GO" id="GO:0044205">
    <property type="term" value="P:'de novo' UMP biosynthetic process"/>
    <property type="evidence" value="ECO:0007669"/>
    <property type="project" value="UniProtKB-UniRule"/>
</dbReference>
<dbReference type="CDD" id="cd04738">
    <property type="entry name" value="DHOD_2_like"/>
    <property type="match status" value="1"/>
</dbReference>
<dbReference type="FunFam" id="3.20.20.70:FF:000028">
    <property type="entry name" value="Dihydroorotate dehydrogenase (quinone)"/>
    <property type="match status" value="1"/>
</dbReference>
<dbReference type="Gene3D" id="3.20.20.70">
    <property type="entry name" value="Aldolase class I"/>
    <property type="match status" value="1"/>
</dbReference>
<dbReference type="HAMAP" id="MF_00225">
    <property type="entry name" value="DHO_dh_type2"/>
    <property type="match status" value="1"/>
</dbReference>
<dbReference type="InterPro" id="IPR013785">
    <property type="entry name" value="Aldolase_TIM"/>
</dbReference>
<dbReference type="InterPro" id="IPR050074">
    <property type="entry name" value="DHO_dehydrogenase"/>
</dbReference>
<dbReference type="InterPro" id="IPR012135">
    <property type="entry name" value="Dihydroorotate_DH_1_2"/>
</dbReference>
<dbReference type="InterPro" id="IPR005719">
    <property type="entry name" value="Dihydroorotate_DH_2"/>
</dbReference>
<dbReference type="InterPro" id="IPR005720">
    <property type="entry name" value="Dihydroorotate_DH_cat"/>
</dbReference>
<dbReference type="InterPro" id="IPR001295">
    <property type="entry name" value="Dihydroorotate_DH_CS"/>
</dbReference>
<dbReference type="NCBIfam" id="NF003644">
    <property type="entry name" value="PRK05286.1-1"/>
    <property type="match status" value="1"/>
</dbReference>
<dbReference type="NCBIfam" id="NF003645">
    <property type="entry name" value="PRK05286.1-2"/>
    <property type="match status" value="1"/>
</dbReference>
<dbReference type="NCBIfam" id="NF003646">
    <property type="entry name" value="PRK05286.1-4"/>
    <property type="match status" value="1"/>
</dbReference>
<dbReference type="NCBIfam" id="NF003652">
    <property type="entry name" value="PRK05286.2-5"/>
    <property type="match status" value="1"/>
</dbReference>
<dbReference type="NCBIfam" id="TIGR01036">
    <property type="entry name" value="pyrD_sub2"/>
    <property type="match status" value="1"/>
</dbReference>
<dbReference type="PANTHER" id="PTHR48109:SF4">
    <property type="entry name" value="DIHYDROOROTATE DEHYDROGENASE (QUINONE), MITOCHONDRIAL"/>
    <property type="match status" value="1"/>
</dbReference>
<dbReference type="PANTHER" id="PTHR48109">
    <property type="entry name" value="DIHYDROOROTATE DEHYDROGENASE (QUINONE), MITOCHONDRIAL-RELATED"/>
    <property type="match status" value="1"/>
</dbReference>
<dbReference type="Pfam" id="PF01180">
    <property type="entry name" value="DHO_dh"/>
    <property type="match status" value="1"/>
</dbReference>
<dbReference type="PIRSF" id="PIRSF000164">
    <property type="entry name" value="DHO_oxidase"/>
    <property type="match status" value="1"/>
</dbReference>
<dbReference type="SUPFAM" id="SSF51395">
    <property type="entry name" value="FMN-linked oxidoreductases"/>
    <property type="match status" value="1"/>
</dbReference>
<dbReference type="PROSITE" id="PS00911">
    <property type="entry name" value="DHODEHASE_1"/>
    <property type="match status" value="1"/>
</dbReference>
<dbReference type="PROSITE" id="PS00912">
    <property type="entry name" value="DHODEHASE_2"/>
    <property type="match status" value="1"/>
</dbReference>
<accession>Q1CGJ0</accession>
<accession>C4GVP6</accession>
<reference key="1">
    <citation type="journal article" date="2006" name="J. Bacteriol.">
        <title>Complete genome sequence of Yersinia pestis strains Antiqua and Nepal516: evidence of gene reduction in an emerging pathogen.</title>
        <authorList>
            <person name="Chain P.S.G."/>
            <person name="Hu P."/>
            <person name="Malfatti S.A."/>
            <person name="Radnedge L."/>
            <person name="Larimer F."/>
            <person name="Vergez L.M."/>
            <person name="Worsham P."/>
            <person name="Chu M.C."/>
            <person name="Andersen G.L."/>
        </authorList>
    </citation>
    <scope>NUCLEOTIDE SEQUENCE [LARGE SCALE GENOMIC DNA]</scope>
    <source>
        <strain>Nepal516</strain>
    </source>
</reference>
<reference key="2">
    <citation type="submission" date="2009-04" db="EMBL/GenBank/DDBJ databases">
        <title>Yersinia pestis Nepal516A whole genome shotgun sequencing project.</title>
        <authorList>
            <person name="Plunkett G. III"/>
            <person name="Anderson B.D."/>
            <person name="Baumler D.J."/>
            <person name="Burland V."/>
            <person name="Cabot E.L."/>
            <person name="Glasner J.D."/>
            <person name="Mau B."/>
            <person name="Neeno-Eckwall E."/>
            <person name="Perna N.T."/>
            <person name="Munk A.C."/>
            <person name="Tapia R."/>
            <person name="Green L.D."/>
            <person name="Rogers Y.C."/>
            <person name="Detter J.C."/>
            <person name="Bruce D.C."/>
            <person name="Brettin T.S."/>
        </authorList>
    </citation>
    <scope>NUCLEOTIDE SEQUENCE [LARGE SCALE GENOMIC DNA]</scope>
    <source>
        <strain>Nepal516</strain>
    </source>
</reference>